<proteinExistence type="evidence at protein level"/>
<reference key="1">
    <citation type="submission" date="1994-05" db="EMBL/GenBank/DDBJ databases">
        <title>E. coli periplasmic thiamin binding protein: cloning, overexpression, purification, and characterization.</title>
        <authorList>
            <person name="Hollenbach A.D."/>
            <person name="Dickson K.A."/>
            <person name="Washabaugh M.W."/>
        </authorList>
    </citation>
    <scope>NUCLEOTIDE SEQUENCE [GENOMIC DNA]</scope>
    <scope>PARTIAL PROTEIN SEQUENCE</scope>
    <scope>CHARACTERIZATION</scope>
    <source>
        <strain>K12 / C600 / CR34 / ATCC 23724 / DSM 3925 / LMG 3041 / NCIB 10222</strain>
    </source>
</reference>
<reference key="2">
    <citation type="journal article" date="1992" name="Nucleic Acids Res.">
        <title>Systematic sequencing of the Escherichia coli genome: analysis of the 0-2.4 min region.</title>
        <authorList>
            <person name="Yura T."/>
            <person name="Mori H."/>
            <person name="Nagai H."/>
            <person name="Nagata T."/>
            <person name="Ishihama A."/>
            <person name="Fujita N."/>
            <person name="Isono K."/>
            <person name="Mizobuchi K."/>
            <person name="Nakata A."/>
        </authorList>
    </citation>
    <scope>NUCLEOTIDE SEQUENCE [LARGE SCALE GENOMIC DNA]</scope>
    <source>
        <strain>K12</strain>
    </source>
</reference>
<reference key="3">
    <citation type="journal article" date="1997" name="Science">
        <title>The complete genome sequence of Escherichia coli K-12.</title>
        <authorList>
            <person name="Blattner F.R."/>
            <person name="Plunkett G. III"/>
            <person name="Bloch C.A."/>
            <person name="Perna N.T."/>
            <person name="Burland V."/>
            <person name="Riley M."/>
            <person name="Collado-Vides J."/>
            <person name="Glasner J.D."/>
            <person name="Rode C.K."/>
            <person name="Mayhew G.F."/>
            <person name="Gregor J."/>
            <person name="Davis N.W."/>
            <person name="Kirkpatrick H.A."/>
            <person name="Goeden M.A."/>
            <person name="Rose D.J."/>
            <person name="Mau B."/>
            <person name="Shao Y."/>
        </authorList>
    </citation>
    <scope>NUCLEOTIDE SEQUENCE [LARGE SCALE GENOMIC DNA]</scope>
    <source>
        <strain>K12 / MG1655 / ATCC 47076</strain>
    </source>
</reference>
<reference key="4">
    <citation type="journal article" date="2006" name="Mol. Syst. Biol.">
        <title>Highly accurate genome sequences of Escherichia coli K-12 strains MG1655 and W3110.</title>
        <authorList>
            <person name="Hayashi K."/>
            <person name="Morooka N."/>
            <person name="Yamamoto Y."/>
            <person name="Fujita K."/>
            <person name="Isono K."/>
            <person name="Choi S."/>
            <person name="Ohtsubo E."/>
            <person name="Baba T."/>
            <person name="Wanner B.L."/>
            <person name="Mori H."/>
            <person name="Horiuchi T."/>
        </authorList>
    </citation>
    <scope>NUCLEOTIDE SEQUENCE [LARGE SCALE GENOMIC DNA]</scope>
    <scope>SEQUENCE REVISION TO 1-12</scope>
    <source>
        <strain>K12 / W3110 / ATCC 27325 / DSM 5911</strain>
    </source>
</reference>
<reference key="5">
    <citation type="journal article" date="2002" name="Protein Expr. Purif.">
        <title>Overexpression, purification, and characterization of the periplasmic space thiamin-binding protein of the thiamin traffic ATPase in Escherichia coli.</title>
        <authorList>
            <person name="Hollenbach A.D."/>
            <person name="Dickson K.A."/>
            <person name="Washabaugh M.W."/>
        </authorList>
    </citation>
    <scope>PROTEIN SEQUENCE OF 19-47</scope>
    <scope>FUNCTION</scope>
    <scope>SUBUNIT</scope>
    <scope>SUBCELLULAR LOCATION</scope>
</reference>
<reference key="6">
    <citation type="journal article" date="2002" name="Biochim. Biophys. Acta">
        <title>Thiamine transport in Escherichia coli: the mechanism of inhibition by the sulfhydryl-specific modifier N-ethylmaleimide.</title>
        <authorList>
            <person name="Hollenbach A.D."/>
            <person name="Dickson K.A."/>
            <person name="Washabaugh M.W."/>
        </authorList>
    </citation>
    <scope>FUNCTION IN THIAMINE TRANSPORT</scope>
    <scope>ACTIVITY REGULATION</scope>
    <source>
        <strain>K12 / KG33</strain>
    </source>
</reference>
<reference evidence="6" key="7">
    <citation type="journal article" date="2008" name="Biochemistry">
        <title>Structural similarities between thiamin-binding protein and thiaminase-I suggest a common ancestor.</title>
        <authorList>
            <person name="Soriano E.V."/>
            <person name="Rajashankar K.R."/>
            <person name="Hanes J.W."/>
            <person name="Bale S."/>
            <person name="Begley T.P."/>
            <person name="Ealick S.E."/>
        </authorList>
    </citation>
    <scope>X-RAY CRYSTALLOGRAPHY (2.25 ANGSTROMS) OF 19-327 IN COMPLEX WITH THIAMINE MONOPHOSPHATE</scope>
</reference>
<feature type="signal peptide" evidence="3">
    <location>
        <begin position="1"/>
        <end position="18"/>
    </location>
</feature>
<feature type="chain" id="PRO_0000031705" description="Thiamine-binding periplasmic protein">
    <location>
        <begin position="19"/>
        <end position="327"/>
    </location>
</feature>
<feature type="binding site" evidence="4 6">
    <location>
        <begin position="59"/>
        <end position="60"/>
    </location>
    <ligand>
        <name>thiamine</name>
        <dbReference type="ChEBI" id="CHEBI:18385"/>
    </ligand>
</feature>
<feature type="binding site" evidence="4 6">
    <location>
        <begin position="161"/>
        <end position="162"/>
    </location>
    <ligand>
        <name>thiamine</name>
        <dbReference type="ChEBI" id="CHEBI:18385"/>
    </ligand>
</feature>
<feature type="binding site" evidence="4 6">
    <location>
        <position position="197"/>
    </location>
    <ligand>
        <name>thiamine</name>
        <dbReference type="ChEBI" id="CHEBI:18385"/>
    </ligand>
</feature>
<feature type="binding site" evidence="4 6">
    <location>
        <begin position="215"/>
        <end position="218"/>
    </location>
    <ligand>
        <name>thiamine</name>
        <dbReference type="ChEBI" id="CHEBI:18385"/>
    </ligand>
</feature>
<feature type="sequence conflict" description="In Ref. 1; AA sequence." evidence="5" ref="1">
    <original>MLKKCLPLLLLC</original>
    <variation>MSAPAVAV</variation>
    <location>
        <begin position="1"/>
        <end position="12"/>
    </location>
</feature>
<feature type="strand" evidence="7">
    <location>
        <begin position="21"/>
        <end position="26"/>
    </location>
</feature>
<feature type="helix" evidence="7">
    <location>
        <begin position="28"/>
        <end position="31"/>
    </location>
</feature>
<feature type="helix" evidence="7">
    <location>
        <begin position="37"/>
        <end position="45"/>
    </location>
</feature>
<feature type="strand" evidence="7">
    <location>
        <begin position="50"/>
        <end position="56"/>
    </location>
</feature>
<feature type="helix" evidence="7">
    <location>
        <begin position="60"/>
        <end position="70"/>
    </location>
</feature>
<feature type="helix" evidence="7">
    <location>
        <begin position="71"/>
        <end position="73"/>
    </location>
</feature>
<feature type="strand" evidence="7">
    <location>
        <begin position="77"/>
        <end position="83"/>
    </location>
</feature>
<feature type="helix" evidence="7">
    <location>
        <begin position="84"/>
        <end position="86"/>
    </location>
</feature>
<feature type="helix" evidence="7">
    <location>
        <begin position="87"/>
        <end position="93"/>
    </location>
</feature>
<feature type="helix" evidence="7">
    <location>
        <begin position="103"/>
        <end position="105"/>
    </location>
</feature>
<feature type="strand" evidence="7">
    <location>
        <begin position="118"/>
        <end position="130"/>
    </location>
</feature>
<feature type="turn" evidence="7">
    <location>
        <begin position="131"/>
        <end position="133"/>
    </location>
</feature>
<feature type="helix" evidence="7">
    <location>
        <begin position="141"/>
        <end position="146"/>
    </location>
</feature>
<feature type="strand" evidence="7">
    <location>
        <begin position="153"/>
        <end position="156"/>
    </location>
</feature>
<feature type="turn" evidence="7">
    <location>
        <begin position="158"/>
        <end position="160"/>
    </location>
</feature>
<feature type="helix" evidence="7">
    <location>
        <begin position="162"/>
        <end position="175"/>
    </location>
</feature>
<feature type="helix" evidence="7">
    <location>
        <begin position="176"/>
        <end position="178"/>
    </location>
</feature>
<feature type="helix" evidence="7">
    <location>
        <begin position="179"/>
        <end position="187"/>
    </location>
</feature>
<feature type="strand" evidence="7">
    <location>
        <begin position="190"/>
        <end position="196"/>
    </location>
</feature>
<feature type="helix" evidence="7">
    <location>
        <begin position="197"/>
        <end position="205"/>
    </location>
</feature>
<feature type="strand" evidence="7">
    <location>
        <begin position="210"/>
        <end position="215"/>
    </location>
</feature>
<feature type="helix" evidence="7">
    <location>
        <begin position="218"/>
        <end position="226"/>
    </location>
</feature>
<feature type="strand" evidence="7">
    <location>
        <begin position="231"/>
        <end position="233"/>
    </location>
</feature>
<feature type="strand" evidence="7">
    <location>
        <begin position="240"/>
        <end position="250"/>
    </location>
</feature>
<feature type="helix" evidence="7">
    <location>
        <begin position="256"/>
        <end position="266"/>
    </location>
</feature>
<feature type="helix" evidence="7">
    <location>
        <begin position="269"/>
        <end position="272"/>
    </location>
</feature>
<feature type="helix" evidence="7">
    <location>
        <begin position="275"/>
        <end position="278"/>
    </location>
</feature>
<feature type="strand" evidence="7">
    <location>
        <begin position="281"/>
        <end position="285"/>
    </location>
</feature>
<feature type="helix" evidence="7">
    <location>
        <begin position="293"/>
        <end position="295"/>
    </location>
</feature>
<feature type="strand" evidence="7">
    <location>
        <begin position="300"/>
        <end position="303"/>
    </location>
</feature>
<feature type="helix" evidence="7">
    <location>
        <begin position="307"/>
        <end position="325"/>
    </location>
</feature>
<comment type="function">
    <text evidence="2 3 4">Part of the ABC transporter complex ThiBPQ involved in thiamine import (PubMed:12175925). Binds thiamine, thiamine phosphate and thiamine diphosphate with high affinity (PubMed:12182833, PubMed:18177053).</text>
</comment>
<comment type="activity regulation">
    <text evidence="2">Transport is inhibited by the sulfhydryl-specific modifier N-ethylmaleimide.</text>
</comment>
<comment type="subunit">
    <text evidence="1 3">Monomer in solution (PubMed:12182833). The complex is composed of two ATP-binding proteins (ThiQ), two transmembrane proteins (ThiP) and a solute-binding protein (ThiB) (By similarity).</text>
</comment>
<comment type="subcellular location">
    <subcellularLocation>
        <location evidence="3">Periplasm</location>
    </subcellularLocation>
</comment>
<comment type="similarity">
    <text evidence="5">Belongs to the bacterial solute-binding protein 1 family.</text>
</comment>
<organism>
    <name type="scientific">Escherichia coli (strain K12)</name>
    <dbReference type="NCBI Taxonomy" id="83333"/>
    <lineage>
        <taxon>Bacteria</taxon>
        <taxon>Pseudomonadati</taxon>
        <taxon>Pseudomonadota</taxon>
        <taxon>Gammaproteobacteria</taxon>
        <taxon>Enterobacterales</taxon>
        <taxon>Enterobacteriaceae</taxon>
        <taxon>Escherichia</taxon>
    </lineage>
</organism>
<evidence type="ECO:0000250" key="1">
    <source>
        <dbReference type="UniProtKB" id="Q7CR85"/>
    </source>
</evidence>
<evidence type="ECO:0000269" key="2">
    <source>
    </source>
</evidence>
<evidence type="ECO:0000269" key="3">
    <source>
    </source>
</evidence>
<evidence type="ECO:0000269" key="4">
    <source>
    </source>
</evidence>
<evidence type="ECO:0000305" key="5"/>
<evidence type="ECO:0007744" key="6">
    <source>
        <dbReference type="PDB" id="2QRY"/>
    </source>
</evidence>
<evidence type="ECO:0007829" key="7">
    <source>
        <dbReference type="PDB" id="2QRY"/>
    </source>
</evidence>
<sequence>MLKKCLPLLLLCTAPVFAKPVLTVYTYDSFAADWGPGPVVKKAFEADCNCELKLVALEDGVSLLNRLRMEGKNSKADVVLGLDNNLLDAASKTGLFAKSGVAADAVNVPGGWNNDTFVPFDYGYFAFVYDKNKLKNPPQSLKELVESDQNWRVIYQDPRTSTPGLGLLLWMQKVYGDDAPQAWQKLAKKTVTVTKGWSEAYGLFLKGESDLVLSYTTSPAYHILEEKKDNYAAANFSEGHYLQVEVAARTAASKQPELAQKFLQFMVSPAFQNAIPTGNWMYPVANVTLPAGFEKLTKPATTLEFTPAEVAAQRQAWISEWQRAVSR</sequence>
<protein>
    <recommendedName>
        <fullName>Thiamine-binding periplasmic protein</fullName>
    </recommendedName>
</protein>
<accession>P31550</accession>
<accession>P75637</accession>
<keyword id="KW-0002">3D-structure</keyword>
<keyword id="KW-0903">Direct protein sequencing</keyword>
<keyword id="KW-0574">Periplasm</keyword>
<keyword id="KW-1185">Reference proteome</keyword>
<keyword id="KW-0732">Signal</keyword>
<keyword id="KW-0813">Transport</keyword>
<dbReference type="EMBL" id="U09984">
    <property type="protein sequence ID" value="AAA18833.1"/>
    <property type="molecule type" value="Genomic_DNA"/>
</dbReference>
<dbReference type="EMBL" id="U00096">
    <property type="protein sequence ID" value="AAC73179.1"/>
    <property type="molecule type" value="Genomic_DNA"/>
</dbReference>
<dbReference type="EMBL" id="AP009048">
    <property type="protein sequence ID" value="BAB96637.2"/>
    <property type="molecule type" value="Genomic_DNA"/>
</dbReference>
<dbReference type="PIR" id="D64728">
    <property type="entry name" value="D64728"/>
</dbReference>
<dbReference type="RefSeq" id="NP_414610.1">
    <property type="nucleotide sequence ID" value="NC_000913.3"/>
</dbReference>
<dbReference type="RefSeq" id="WP_001301364.1">
    <property type="nucleotide sequence ID" value="NZ_STEB01000010.1"/>
</dbReference>
<dbReference type="PDB" id="2QRY">
    <property type="method" value="X-ray"/>
    <property type="resolution" value="2.25 A"/>
    <property type="chains" value="A/B/C/D=19-327"/>
</dbReference>
<dbReference type="PDBsum" id="2QRY"/>
<dbReference type="SMR" id="P31550"/>
<dbReference type="BioGRID" id="4261341">
    <property type="interactions" value="37"/>
</dbReference>
<dbReference type="ComplexPortal" id="CPX-4387">
    <property type="entry name" value="Thiamine ABC transporter complex"/>
</dbReference>
<dbReference type="DIP" id="DIP-10967N"/>
<dbReference type="FunCoup" id="P31550">
    <property type="interactions" value="199"/>
</dbReference>
<dbReference type="IntAct" id="P31550">
    <property type="interactions" value="3"/>
</dbReference>
<dbReference type="STRING" id="511145.b0068"/>
<dbReference type="BindingDB" id="P31550"/>
<dbReference type="TCDB" id="3.A.1.19.1">
    <property type="family name" value="the atp-binding cassette (abc) superfamily"/>
</dbReference>
<dbReference type="jPOST" id="P31550"/>
<dbReference type="PaxDb" id="511145-b0068"/>
<dbReference type="EnsemblBacteria" id="AAC73179">
    <property type="protein sequence ID" value="AAC73179"/>
    <property type="gene ID" value="b0068"/>
</dbReference>
<dbReference type="GeneID" id="946306"/>
<dbReference type="KEGG" id="ecj:JW0067"/>
<dbReference type="KEGG" id="eco:b0068"/>
<dbReference type="PATRIC" id="fig|1411691.4.peg.2214"/>
<dbReference type="EchoBASE" id="EB1534"/>
<dbReference type="eggNOG" id="COG4143">
    <property type="taxonomic scope" value="Bacteria"/>
</dbReference>
<dbReference type="HOGENOM" id="CLU_026974_6_0_6"/>
<dbReference type="InParanoid" id="P31550"/>
<dbReference type="OMA" id="PTTNWMY"/>
<dbReference type="OrthoDB" id="8013425at2"/>
<dbReference type="PhylomeDB" id="P31550"/>
<dbReference type="BioCyc" id="EcoCyc:SFUA-MONOMER"/>
<dbReference type="BioCyc" id="MetaCyc:SFUA-MONOMER"/>
<dbReference type="EvolutionaryTrace" id="P31550"/>
<dbReference type="PRO" id="PR:P31550"/>
<dbReference type="Proteomes" id="UP000000625">
    <property type="component" value="Chromosome"/>
</dbReference>
<dbReference type="GO" id="GO:0055052">
    <property type="term" value="C:ATP-binding cassette (ABC) transporter complex, substrate-binding subunit-containing"/>
    <property type="evidence" value="ECO:0000303"/>
    <property type="project" value="ComplexPortal"/>
</dbReference>
<dbReference type="GO" id="GO:0016020">
    <property type="term" value="C:membrane"/>
    <property type="evidence" value="ECO:0000303"/>
    <property type="project" value="ComplexPortal"/>
</dbReference>
<dbReference type="GO" id="GO:0030288">
    <property type="term" value="C:outer membrane-bounded periplasmic space"/>
    <property type="evidence" value="ECO:0000314"/>
    <property type="project" value="EcoCyc"/>
</dbReference>
<dbReference type="GO" id="GO:0030975">
    <property type="term" value="F:thiamine binding"/>
    <property type="evidence" value="ECO:0000353"/>
    <property type="project" value="EcoCyc"/>
</dbReference>
<dbReference type="GO" id="GO:0030976">
    <property type="term" value="F:thiamine pyrophosphate binding"/>
    <property type="evidence" value="ECO:0000353"/>
    <property type="project" value="EcoCyc"/>
</dbReference>
<dbReference type="GO" id="GO:0071934">
    <property type="term" value="P:thiamine transmembrane transport"/>
    <property type="evidence" value="ECO:0000303"/>
    <property type="project" value="ComplexPortal"/>
</dbReference>
<dbReference type="GO" id="GO:0015888">
    <property type="term" value="P:thiamine transport"/>
    <property type="evidence" value="ECO:0000314"/>
    <property type="project" value="EcoCyc"/>
</dbReference>
<dbReference type="CDD" id="cd13545">
    <property type="entry name" value="PBP2_TbpA"/>
    <property type="match status" value="1"/>
</dbReference>
<dbReference type="Gene3D" id="3.40.190.10">
    <property type="entry name" value="Periplasmic binding protein-like II"/>
    <property type="match status" value="2"/>
</dbReference>
<dbReference type="InterPro" id="IPR006059">
    <property type="entry name" value="SBP"/>
</dbReference>
<dbReference type="InterPro" id="IPR006061">
    <property type="entry name" value="SBP_1_CS"/>
</dbReference>
<dbReference type="InterPro" id="IPR005967">
    <property type="entry name" value="ThiB"/>
</dbReference>
<dbReference type="InterPro" id="IPR005948">
    <property type="entry name" value="ThiB-like"/>
</dbReference>
<dbReference type="NCBIfam" id="TIGR01254">
    <property type="entry name" value="sfuA"/>
    <property type="match status" value="1"/>
</dbReference>
<dbReference type="NCBIfam" id="TIGR01276">
    <property type="entry name" value="thiB"/>
    <property type="match status" value="1"/>
</dbReference>
<dbReference type="PANTHER" id="PTHR30006:SF3">
    <property type="entry name" value="THIAMINE-BINDING PERIPLASMIC PROTEIN"/>
    <property type="match status" value="1"/>
</dbReference>
<dbReference type="PANTHER" id="PTHR30006">
    <property type="entry name" value="THIAMINE-BINDING PERIPLASMIC PROTEIN-RELATED"/>
    <property type="match status" value="1"/>
</dbReference>
<dbReference type="Pfam" id="PF01547">
    <property type="entry name" value="SBP_bac_1"/>
    <property type="match status" value="1"/>
</dbReference>
<dbReference type="SUPFAM" id="SSF53850">
    <property type="entry name" value="Periplasmic binding protein-like II"/>
    <property type="match status" value="1"/>
</dbReference>
<dbReference type="PROSITE" id="PS01037">
    <property type="entry name" value="SBP_BACTERIAL_1"/>
    <property type="match status" value="1"/>
</dbReference>
<name>THIB_ECOLI</name>
<gene>
    <name type="primary">thiB</name>
    <name type="synonym">tbpA</name>
    <name type="synonym">yabL</name>
    <name type="ordered locus">b0068</name>
    <name type="ordered locus">JW0067</name>
</gene>